<proteinExistence type="evidence at protein level"/>
<reference evidence="5" key="1">
    <citation type="journal article" date="2018" name="J. Proteome Res.">
        <title>Mating-induced differential peptidomics of neuropeptides and protein hormones in Agrotis ipsilon moths.</title>
        <authorList>
            <person name="Diesner M."/>
            <person name="Gallot A."/>
            <person name="Binz H."/>
            <person name="Gaertner C."/>
            <person name="Vitecek S."/>
            <person name="Kahnt J."/>
            <person name="Schachtner J."/>
            <person name="Jacquin-Joly E."/>
            <person name="Gadenne C."/>
        </authorList>
    </citation>
    <scope>NUCLEOTIDE SEQUENCE [MRNA]</scope>
    <scope>PROTEIN SEQUENCE OF 20-30</scope>
    <scope>TISSUE SPECIFICITY</scope>
    <scope>MASS SPECTROMETRY</scope>
    <scope>IDENTIFICATION BY MASS SPECTROMETRY</scope>
    <scope>AMIDATION AT ASN-30</scope>
    <scope>PYROGLUTAMATE FORMATION AT GLN-20</scope>
</reference>
<organism>
    <name type="scientific">Agrotis ipsilon</name>
    <name type="common">Black cutworm moth</name>
    <dbReference type="NCBI Taxonomy" id="56364"/>
    <lineage>
        <taxon>Eukaryota</taxon>
        <taxon>Metazoa</taxon>
        <taxon>Ecdysozoa</taxon>
        <taxon>Arthropoda</taxon>
        <taxon>Hexapoda</taxon>
        <taxon>Insecta</taxon>
        <taxon>Pterygota</taxon>
        <taxon>Neoptera</taxon>
        <taxon>Endopterygota</taxon>
        <taxon>Lepidoptera</taxon>
        <taxon>Glossata</taxon>
        <taxon>Ditrysia</taxon>
        <taxon>Noctuoidea</taxon>
        <taxon>Noctuidae</taxon>
        <taxon>Noctuinae</taxon>
        <taxon>Noctuini</taxon>
        <taxon>Agrotis</taxon>
    </lineage>
</organism>
<keyword id="KW-0027">Amidation</keyword>
<keyword id="KW-0165">Cleavage on pair of basic residues</keyword>
<keyword id="KW-0903">Direct protein sequencing</keyword>
<keyword id="KW-0527">Neuropeptide</keyword>
<keyword id="KW-0873">Pyrrolidone carboxylic acid</keyword>
<keyword id="KW-0964">Secreted</keyword>
<keyword id="KW-0732">Signal</keyword>
<evidence type="ECO:0000250" key="1">
    <source>
        <dbReference type="UniProtKB" id="Q26377"/>
    </source>
</evidence>
<evidence type="ECO:0000255" key="2"/>
<evidence type="ECO:0000269" key="3">
    <source>
    </source>
</evidence>
<evidence type="ECO:0000303" key="4">
    <source>
    </source>
</evidence>
<evidence type="ECO:0000305" key="5"/>
<accession>C0HKT2</accession>
<sequence>MSANVTLLLIFVTLASVTAQTFQYSRGWTNGKRDQGHLRPELKELINNMDKILSPCQKNKLKYLLEGKPVTERLLIPCDILDTEEYPRALTERNLNAMMDAFY</sequence>
<feature type="signal peptide" evidence="2">
    <location>
        <begin position="1"/>
        <end position="19"/>
    </location>
</feature>
<feature type="peptide" id="PRO_0000444224" description="Corazonin" evidence="3">
    <location>
        <begin position="20"/>
        <end position="30"/>
    </location>
</feature>
<feature type="propeptide" id="PRO_0000444225" evidence="5">
    <location>
        <begin position="34"/>
        <end position="103"/>
    </location>
</feature>
<feature type="modified residue" description="Pyrrolidone carboxylic acid" evidence="3">
    <location>
        <position position="20"/>
    </location>
</feature>
<feature type="modified residue" description="Asparagine amide" evidence="3">
    <location>
        <position position="30"/>
    </location>
</feature>
<protein>
    <recommendedName>
        <fullName evidence="1">Pro-corazonin</fullName>
    </recommendedName>
    <component>
        <recommendedName>
            <fullName evidence="4">Corazonin</fullName>
        </recommendedName>
    </component>
</protein>
<name>CORZ_AGRIP</name>
<dbReference type="GO" id="GO:0005576">
    <property type="term" value="C:extracellular region"/>
    <property type="evidence" value="ECO:0007669"/>
    <property type="project" value="UniProtKB-SubCell"/>
</dbReference>
<dbReference type="GO" id="GO:0071858">
    <property type="term" value="F:corazonin receptor binding"/>
    <property type="evidence" value="ECO:0007669"/>
    <property type="project" value="InterPro"/>
</dbReference>
<dbReference type="GO" id="GO:0007218">
    <property type="term" value="P:neuropeptide signaling pathway"/>
    <property type="evidence" value="ECO:0007669"/>
    <property type="project" value="UniProtKB-KW"/>
</dbReference>
<dbReference type="GO" id="GO:0045823">
    <property type="term" value="P:positive regulation of heart contraction"/>
    <property type="evidence" value="ECO:0007669"/>
    <property type="project" value="InterPro"/>
</dbReference>
<dbReference type="InterPro" id="IPR020190">
    <property type="entry name" value="Procorazonin"/>
</dbReference>
<dbReference type="Pfam" id="PF17308">
    <property type="entry name" value="Corazonin"/>
    <property type="match status" value="1"/>
</dbReference>
<comment type="function">
    <text evidence="1">Cardioactive peptide. Corazonin is probably involved in the physiological regulation of the heart beat.</text>
</comment>
<comment type="subcellular location">
    <subcellularLocation>
        <location evidence="5">Secreted</location>
    </subcellularLocation>
</comment>
<comment type="tissue specificity">
    <text evidence="3">Expressed in corpora cardiaca (CC), corpora allata (CA), antennal lobe (AL) and gnathal ganglion (GNG) (at protein level). Expression in CC and CA detected in all animals, expression in AL and in GNG in some animals.</text>
</comment>
<comment type="mass spectrometry"/>
<comment type="similarity">
    <text evidence="5">Belongs to the corazonin family.</text>
</comment>